<accession>A2CDX8</accession>
<proteinExistence type="inferred from homology"/>
<gene>
    <name evidence="1" type="primary">pyrG</name>
    <name type="ordered locus">P9303_29581</name>
</gene>
<dbReference type="EC" id="6.3.4.2" evidence="1"/>
<dbReference type="EMBL" id="CP000554">
    <property type="protein sequence ID" value="ABM79688.1"/>
    <property type="molecule type" value="Genomic_DNA"/>
</dbReference>
<dbReference type="RefSeq" id="WP_011827526.1">
    <property type="nucleotide sequence ID" value="NC_008820.1"/>
</dbReference>
<dbReference type="SMR" id="A2CDX8"/>
<dbReference type="STRING" id="59922.P9303_29581"/>
<dbReference type="KEGG" id="pmf:P9303_29581"/>
<dbReference type="HOGENOM" id="CLU_011675_5_0_3"/>
<dbReference type="BioCyc" id="PMAR59922:G1G80-2597-MONOMER"/>
<dbReference type="UniPathway" id="UPA00159">
    <property type="reaction ID" value="UER00277"/>
</dbReference>
<dbReference type="Proteomes" id="UP000002274">
    <property type="component" value="Chromosome"/>
</dbReference>
<dbReference type="GO" id="GO:0005829">
    <property type="term" value="C:cytosol"/>
    <property type="evidence" value="ECO:0007669"/>
    <property type="project" value="TreeGrafter"/>
</dbReference>
<dbReference type="GO" id="GO:0005524">
    <property type="term" value="F:ATP binding"/>
    <property type="evidence" value="ECO:0007669"/>
    <property type="project" value="UniProtKB-KW"/>
</dbReference>
<dbReference type="GO" id="GO:0003883">
    <property type="term" value="F:CTP synthase activity"/>
    <property type="evidence" value="ECO:0007669"/>
    <property type="project" value="UniProtKB-UniRule"/>
</dbReference>
<dbReference type="GO" id="GO:0004359">
    <property type="term" value="F:glutaminase activity"/>
    <property type="evidence" value="ECO:0007669"/>
    <property type="project" value="RHEA"/>
</dbReference>
<dbReference type="GO" id="GO:0042802">
    <property type="term" value="F:identical protein binding"/>
    <property type="evidence" value="ECO:0007669"/>
    <property type="project" value="TreeGrafter"/>
</dbReference>
<dbReference type="GO" id="GO:0046872">
    <property type="term" value="F:metal ion binding"/>
    <property type="evidence" value="ECO:0007669"/>
    <property type="project" value="UniProtKB-KW"/>
</dbReference>
<dbReference type="GO" id="GO:0044210">
    <property type="term" value="P:'de novo' CTP biosynthetic process"/>
    <property type="evidence" value="ECO:0007669"/>
    <property type="project" value="UniProtKB-UniRule"/>
</dbReference>
<dbReference type="GO" id="GO:0019856">
    <property type="term" value="P:pyrimidine nucleobase biosynthetic process"/>
    <property type="evidence" value="ECO:0007669"/>
    <property type="project" value="TreeGrafter"/>
</dbReference>
<dbReference type="CDD" id="cd03113">
    <property type="entry name" value="CTPS_N"/>
    <property type="match status" value="1"/>
</dbReference>
<dbReference type="CDD" id="cd01746">
    <property type="entry name" value="GATase1_CTP_Synthase"/>
    <property type="match status" value="1"/>
</dbReference>
<dbReference type="FunFam" id="3.40.50.300:FF:000009">
    <property type="entry name" value="CTP synthase"/>
    <property type="match status" value="1"/>
</dbReference>
<dbReference type="FunFam" id="3.40.50.880:FF:000002">
    <property type="entry name" value="CTP synthase"/>
    <property type="match status" value="1"/>
</dbReference>
<dbReference type="Gene3D" id="3.40.50.880">
    <property type="match status" value="1"/>
</dbReference>
<dbReference type="Gene3D" id="3.40.50.300">
    <property type="entry name" value="P-loop containing nucleotide triphosphate hydrolases"/>
    <property type="match status" value="1"/>
</dbReference>
<dbReference type="HAMAP" id="MF_01227">
    <property type="entry name" value="PyrG"/>
    <property type="match status" value="1"/>
</dbReference>
<dbReference type="InterPro" id="IPR029062">
    <property type="entry name" value="Class_I_gatase-like"/>
</dbReference>
<dbReference type="InterPro" id="IPR004468">
    <property type="entry name" value="CTP_synthase"/>
</dbReference>
<dbReference type="InterPro" id="IPR017456">
    <property type="entry name" value="CTP_synthase_N"/>
</dbReference>
<dbReference type="InterPro" id="IPR017926">
    <property type="entry name" value="GATASE"/>
</dbReference>
<dbReference type="InterPro" id="IPR033828">
    <property type="entry name" value="GATase1_CTP_Synthase"/>
</dbReference>
<dbReference type="InterPro" id="IPR027417">
    <property type="entry name" value="P-loop_NTPase"/>
</dbReference>
<dbReference type="NCBIfam" id="NF003792">
    <property type="entry name" value="PRK05380.1"/>
    <property type="match status" value="1"/>
</dbReference>
<dbReference type="NCBIfam" id="TIGR00337">
    <property type="entry name" value="PyrG"/>
    <property type="match status" value="1"/>
</dbReference>
<dbReference type="PANTHER" id="PTHR11550">
    <property type="entry name" value="CTP SYNTHASE"/>
    <property type="match status" value="1"/>
</dbReference>
<dbReference type="PANTHER" id="PTHR11550:SF0">
    <property type="entry name" value="CTP SYNTHASE-RELATED"/>
    <property type="match status" value="1"/>
</dbReference>
<dbReference type="Pfam" id="PF06418">
    <property type="entry name" value="CTP_synth_N"/>
    <property type="match status" value="1"/>
</dbReference>
<dbReference type="Pfam" id="PF00117">
    <property type="entry name" value="GATase"/>
    <property type="match status" value="1"/>
</dbReference>
<dbReference type="SUPFAM" id="SSF52317">
    <property type="entry name" value="Class I glutamine amidotransferase-like"/>
    <property type="match status" value="1"/>
</dbReference>
<dbReference type="SUPFAM" id="SSF52540">
    <property type="entry name" value="P-loop containing nucleoside triphosphate hydrolases"/>
    <property type="match status" value="1"/>
</dbReference>
<dbReference type="PROSITE" id="PS51273">
    <property type="entry name" value="GATASE_TYPE_1"/>
    <property type="match status" value="1"/>
</dbReference>
<name>PYRG_PROM3</name>
<protein>
    <recommendedName>
        <fullName evidence="1">CTP synthase</fullName>
        <ecNumber evidence="1">6.3.4.2</ecNumber>
    </recommendedName>
    <alternativeName>
        <fullName evidence="1">Cytidine 5'-triphosphate synthase</fullName>
    </alternativeName>
    <alternativeName>
        <fullName evidence="1">Cytidine triphosphate synthetase</fullName>
        <shortName evidence="1">CTP synthetase</shortName>
        <shortName evidence="1">CTPS</shortName>
    </alternativeName>
    <alternativeName>
        <fullName evidence="1">UTP--ammonia ligase</fullName>
    </alternativeName>
</protein>
<organism>
    <name type="scientific">Prochlorococcus marinus (strain MIT 9303)</name>
    <dbReference type="NCBI Taxonomy" id="59922"/>
    <lineage>
        <taxon>Bacteria</taxon>
        <taxon>Bacillati</taxon>
        <taxon>Cyanobacteriota</taxon>
        <taxon>Cyanophyceae</taxon>
        <taxon>Synechococcales</taxon>
        <taxon>Prochlorococcaceae</taxon>
        <taxon>Prochlorococcus</taxon>
    </lineage>
</organism>
<evidence type="ECO:0000255" key="1">
    <source>
        <dbReference type="HAMAP-Rule" id="MF_01227"/>
    </source>
</evidence>
<evidence type="ECO:0000256" key="2">
    <source>
        <dbReference type="SAM" id="MobiDB-lite"/>
    </source>
</evidence>
<sequence>MAKFVFVTGGVVSSIGKGIVAASLGRLLKSRGYSVSILKLDPYLNVDPGTMSPFQHGEVFVTEDGAETDLDLGHYERFTDTAMSRLNSVTTGSIYQAVINKERRGDYNGGTVQVIPHITGEIRERIHRVAANSGADVVITEIGGTVGDIESLPFLEAIREFRGDVGRNDLAYIHVTLLPFIGTSGELKTKPTQHSVKELRAIGIQPDVLVCRSDRPINEDLKRKIGGFCGVPNRAVIPALDADSIYAVPISLEEEGLCLEMLDVLNLTDHDSDMKNWVQLVHKLRNPGPAVKVALVGKYVQLNDAYLSVVEALRHACLTQDASLELSWVCAEQIETHGPENLLKGMDAVVVPGGFGNRGVDGKIAAIRWAREQRVPFLGLCLGMQCAVIEWARNQAGLTGASSAELEPDTSHPVIHLLPEQQDVVDLGGTMRLGVYPCRIAPDTLAQKLYGEEVVYERHRHRYEFNNSYRNLFIESGYTISGSSPDGRLVELIELKGHPFFTACQYHPEFLSRPGKPHPLFRGLIEAAQLRLPASPDEALRRQSQTNISAQEKPSRIG</sequence>
<reference key="1">
    <citation type="journal article" date="2007" name="PLoS Genet.">
        <title>Patterns and implications of gene gain and loss in the evolution of Prochlorococcus.</title>
        <authorList>
            <person name="Kettler G.C."/>
            <person name="Martiny A.C."/>
            <person name="Huang K."/>
            <person name="Zucker J."/>
            <person name="Coleman M.L."/>
            <person name="Rodrigue S."/>
            <person name="Chen F."/>
            <person name="Lapidus A."/>
            <person name="Ferriera S."/>
            <person name="Johnson J."/>
            <person name="Steglich C."/>
            <person name="Church G.M."/>
            <person name="Richardson P."/>
            <person name="Chisholm S.W."/>
        </authorList>
    </citation>
    <scope>NUCLEOTIDE SEQUENCE [LARGE SCALE GENOMIC DNA]</scope>
    <source>
        <strain>MIT 9303</strain>
    </source>
</reference>
<comment type="function">
    <text evidence="1">Catalyzes the ATP-dependent amination of UTP to CTP with either L-glutamine or ammonia as the source of nitrogen. Regulates intracellular CTP levels through interactions with the four ribonucleotide triphosphates.</text>
</comment>
<comment type="catalytic activity">
    <reaction evidence="1">
        <text>UTP + L-glutamine + ATP + H2O = CTP + L-glutamate + ADP + phosphate + 2 H(+)</text>
        <dbReference type="Rhea" id="RHEA:26426"/>
        <dbReference type="ChEBI" id="CHEBI:15377"/>
        <dbReference type="ChEBI" id="CHEBI:15378"/>
        <dbReference type="ChEBI" id="CHEBI:29985"/>
        <dbReference type="ChEBI" id="CHEBI:30616"/>
        <dbReference type="ChEBI" id="CHEBI:37563"/>
        <dbReference type="ChEBI" id="CHEBI:43474"/>
        <dbReference type="ChEBI" id="CHEBI:46398"/>
        <dbReference type="ChEBI" id="CHEBI:58359"/>
        <dbReference type="ChEBI" id="CHEBI:456216"/>
        <dbReference type="EC" id="6.3.4.2"/>
    </reaction>
</comment>
<comment type="catalytic activity">
    <reaction evidence="1">
        <text>L-glutamine + H2O = L-glutamate + NH4(+)</text>
        <dbReference type="Rhea" id="RHEA:15889"/>
        <dbReference type="ChEBI" id="CHEBI:15377"/>
        <dbReference type="ChEBI" id="CHEBI:28938"/>
        <dbReference type="ChEBI" id="CHEBI:29985"/>
        <dbReference type="ChEBI" id="CHEBI:58359"/>
    </reaction>
</comment>
<comment type="catalytic activity">
    <reaction evidence="1">
        <text>UTP + NH4(+) + ATP = CTP + ADP + phosphate + 2 H(+)</text>
        <dbReference type="Rhea" id="RHEA:16597"/>
        <dbReference type="ChEBI" id="CHEBI:15378"/>
        <dbReference type="ChEBI" id="CHEBI:28938"/>
        <dbReference type="ChEBI" id="CHEBI:30616"/>
        <dbReference type="ChEBI" id="CHEBI:37563"/>
        <dbReference type="ChEBI" id="CHEBI:43474"/>
        <dbReference type="ChEBI" id="CHEBI:46398"/>
        <dbReference type="ChEBI" id="CHEBI:456216"/>
    </reaction>
</comment>
<comment type="activity regulation">
    <text evidence="1">Allosterically activated by GTP, when glutamine is the substrate; GTP has no effect on the reaction when ammonia is the substrate. The allosteric effector GTP functions by stabilizing the protein conformation that binds the tetrahedral intermediate(s) formed during glutamine hydrolysis. Inhibited by the product CTP, via allosteric rather than competitive inhibition.</text>
</comment>
<comment type="pathway">
    <text evidence="1">Pyrimidine metabolism; CTP biosynthesis via de novo pathway; CTP from UDP: step 2/2.</text>
</comment>
<comment type="subunit">
    <text evidence="1">Homotetramer.</text>
</comment>
<comment type="miscellaneous">
    <text evidence="1">CTPSs have evolved a hybrid strategy for distinguishing between UTP and CTP. The overlapping regions of the product feedback inhibitory and substrate sites recognize a common feature in both compounds, the triphosphate moiety. To differentiate isosteric substrate and product pyrimidine rings, an additional pocket far from the expected kinase/ligase catalytic site, specifically recognizes the cytosine and ribose portions of the product inhibitor.</text>
</comment>
<comment type="similarity">
    <text evidence="1">Belongs to the CTP synthase family.</text>
</comment>
<feature type="chain" id="PRO_1000139524" description="CTP synthase">
    <location>
        <begin position="1"/>
        <end position="558"/>
    </location>
</feature>
<feature type="domain" description="Glutamine amidotransferase type-1" evidence="1">
    <location>
        <begin position="292"/>
        <end position="534"/>
    </location>
</feature>
<feature type="region of interest" description="Amidoligase domain" evidence="1">
    <location>
        <begin position="1"/>
        <end position="267"/>
    </location>
</feature>
<feature type="region of interest" description="Disordered" evidence="2">
    <location>
        <begin position="536"/>
        <end position="558"/>
    </location>
</feature>
<feature type="compositionally biased region" description="Polar residues" evidence="2">
    <location>
        <begin position="542"/>
        <end position="552"/>
    </location>
</feature>
<feature type="active site" description="Nucleophile; for glutamine hydrolysis" evidence="1">
    <location>
        <position position="381"/>
    </location>
</feature>
<feature type="active site" evidence="1">
    <location>
        <position position="507"/>
    </location>
</feature>
<feature type="active site" evidence="1">
    <location>
        <position position="509"/>
    </location>
</feature>
<feature type="binding site" evidence="1">
    <location>
        <position position="13"/>
    </location>
    <ligand>
        <name>CTP</name>
        <dbReference type="ChEBI" id="CHEBI:37563"/>
        <note>allosteric inhibitor</note>
    </ligand>
</feature>
<feature type="binding site" evidence="1">
    <location>
        <position position="13"/>
    </location>
    <ligand>
        <name>UTP</name>
        <dbReference type="ChEBI" id="CHEBI:46398"/>
    </ligand>
</feature>
<feature type="binding site" evidence="1">
    <location>
        <begin position="14"/>
        <end position="19"/>
    </location>
    <ligand>
        <name>ATP</name>
        <dbReference type="ChEBI" id="CHEBI:30616"/>
    </ligand>
</feature>
<feature type="binding site" evidence="1">
    <location>
        <position position="71"/>
    </location>
    <ligand>
        <name>ATP</name>
        <dbReference type="ChEBI" id="CHEBI:30616"/>
    </ligand>
</feature>
<feature type="binding site" evidence="1">
    <location>
        <position position="71"/>
    </location>
    <ligand>
        <name>Mg(2+)</name>
        <dbReference type="ChEBI" id="CHEBI:18420"/>
    </ligand>
</feature>
<feature type="binding site" evidence="1">
    <location>
        <position position="141"/>
    </location>
    <ligand>
        <name>Mg(2+)</name>
        <dbReference type="ChEBI" id="CHEBI:18420"/>
    </ligand>
</feature>
<feature type="binding site" evidence="1">
    <location>
        <begin position="148"/>
        <end position="150"/>
    </location>
    <ligand>
        <name>CTP</name>
        <dbReference type="ChEBI" id="CHEBI:37563"/>
        <note>allosteric inhibitor</note>
    </ligand>
</feature>
<feature type="binding site" evidence="1">
    <location>
        <begin position="188"/>
        <end position="193"/>
    </location>
    <ligand>
        <name>CTP</name>
        <dbReference type="ChEBI" id="CHEBI:37563"/>
        <note>allosteric inhibitor</note>
    </ligand>
</feature>
<feature type="binding site" evidence="1">
    <location>
        <begin position="188"/>
        <end position="193"/>
    </location>
    <ligand>
        <name>UTP</name>
        <dbReference type="ChEBI" id="CHEBI:46398"/>
    </ligand>
</feature>
<feature type="binding site" evidence="1">
    <location>
        <position position="224"/>
    </location>
    <ligand>
        <name>CTP</name>
        <dbReference type="ChEBI" id="CHEBI:37563"/>
        <note>allosteric inhibitor</note>
    </ligand>
</feature>
<feature type="binding site" evidence="1">
    <location>
        <position position="224"/>
    </location>
    <ligand>
        <name>UTP</name>
        <dbReference type="ChEBI" id="CHEBI:46398"/>
    </ligand>
</feature>
<feature type="binding site" evidence="1">
    <location>
        <position position="354"/>
    </location>
    <ligand>
        <name>L-glutamine</name>
        <dbReference type="ChEBI" id="CHEBI:58359"/>
    </ligand>
</feature>
<feature type="binding site" evidence="1">
    <location>
        <begin position="382"/>
        <end position="385"/>
    </location>
    <ligand>
        <name>L-glutamine</name>
        <dbReference type="ChEBI" id="CHEBI:58359"/>
    </ligand>
</feature>
<feature type="binding site" evidence="1">
    <location>
        <position position="405"/>
    </location>
    <ligand>
        <name>L-glutamine</name>
        <dbReference type="ChEBI" id="CHEBI:58359"/>
    </ligand>
</feature>
<feature type="binding site" evidence="1">
    <location>
        <position position="462"/>
    </location>
    <ligand>
        <name>L-glutamine</name>
        <dbReference type="ChEBI" id="CHEBI:58359"/>
    </ligand>
</feature>
<keyword id="KW-0067">ATP-binding</keyword>
<keyword id="KW-0315">Glutamine amidotransferase</keyword>
<keyword id="KW-0436">Ligase</keyword>
<keyword id="KW-0460">Magnesium</keyword>
<keyword id="KW-0479">Metal-binding</keyword>
<keyword id="KW-0547">Nucleotide-binding</keyword>
<keyword id="KW-0665">Pyrimidine biosynthesis</keyword>